<feature type="chain" id="PRO_0000437811" description="Heavy metal-associated isoprenylated plant protein 11">
    <location>
        <begin position="1"/>
        <end position="182"/>
    </location>
</feature>
<feature type="propeptide" id="PRO_0000437812" description="Removed in mature form" evidence="7">
    <location>
        <begin position="183"/>
        <end position="185"/>
    </location>
</feature>
<feature type="domain" description="HMA" evidence="3">
    <location>
        <begin position="39"/>
        <end position="106"/>
    </location>
</feature>
<feature type="region of interest" description="Disordered" evidence="4">
    <location>
        <begin position="109"/>
        <end position="185"/>
    </location>
</feature>
<feature type="compositionally biased region" description="Basic and acidic residues" evidence="4">
    <location>
        <begin position="109"/>
        <end position="158"/>
    </location>
</feature>
<feature type="modified residue" description="Cysteine methyl ester" evidence="2">
    <location>
        <position position="182"/>
    </location>
</feature>
<feature type="lipid moiety-binding region" description="S-farnesyl cysteine" evidence="2">
    <location>
        <position position="182"/>
    </location>
</feature>
<dbReference type="EMBL" id="AB025606">
    <property type="protein sequence ID" value="BAA98091.1"/>
    <property type="molecule type" value="Genomic_DNA"/>
</dbReference>
<dbReference type="EMBL" id="CP002688">
    <property type="protein sequence ID" value="AED96254.1"/>
    <property type="molecule type" value="Genomic_DNA"/>
</dbReference>
<dbReference type="RefSeq" id="NP_200085.1">
    <property type="nucleotide sequence ID" value="NM_124651.2"/>
</dbReference>
<dbReference type="SMR" id="Q9LTE4"/>
<dbReference type="PaxDb" id="3702-AT5G52730.1"/>
<dbReference type="ProteomicsDB" id="232216"/>
<dbReference type="EnsemblPlants" id="AT5G52730.1">
    <property type="protein sequence ID" value="AT5G52730.1"/>
    <property type="gene ID" value="AT5G52730"/>
</dbReference>
<dbReference type="GeneID" id="835350"/>
<dbReference type="Gramene" id="AT5G52730.1">
    <property type="protein sequence ID" value="AT5G52730.1"/>
    <property type="gene ID" value="AT5G52730"/>
</dbReference>
<dbReference type="KEGG" id="ath:AT5G52730"/>
<dbReference type="Araport" id="AT5G52730"/>
<dbReference type="TAIR" id="AT5G52730"/>
<dbReference type="HOGENOM" id="CLU_1463230_0_0_1"/>
<dbReference type="InParanoid" id="Q9LTE4"/>
<dbReference type="OMA" id="MYINTHD"/>
<dbReference type="PRO" id="PR:Q9LTE4"/>
<dbReference type="Proteomes" id="UP000006548">
    <property type="component" value="Chromosome 5"/>
</dbReference>
<dbReference type="ExpressionAtlas" id="Q9LTE4">
    <property type="expression patterns" value="baseline and differential"/>
</dbReference>
<dbReference type="GO" id="GO:0046872">
    <property type="term" value="F:metal ion binding"/>
    <property type="evidence" value="ECO:0007669"/>
    <property type="project" value="UniProtKB-KW"/>
</dbReference>
<dbReference type="Gene3D" id="3.30.70.100">
    <property type="match status" value="1"/>
</dbReference>
<dbReference type="InterPro" id="IPR051863">
    <property type="entry name" value="HIPP"/>
</dbReference>
<dbReference type="InterPro" id="IPR006121">
    <property type="entry name" value="HMA_dom"/>
</dbReference>
<dbReference type="PANTHER" id="PTHR45811">
    <property type="entry name" value="COPPER TRANSPORT PROTEIN FAMILY-RELATED"/>
    <property type="match status" value="1"/>
</dbReference>
<dbReference type="PANTHER" id="PTHR45811:SF16">
    <property type="entry name" value="COPPER TRANSPORT PROTEIN FAMILY-RELATED"/>
    <property type="match status" value="1"/>
</dbReference>
<dbReference type="PROSITE" id="PS50846">
    <property type="entry name" value="HMA_2"/>
    <property type="match status" value="1"/>
</dbReference>
<sequence length="185" mass="21487">MYINTHDSIFGAGNHKTFTFLYIISLHSSYKLFHFLKMQQNTNVVFKLEVDERKKKKAMKIVCGFSGVTSLNVMEEGKLTVTGEFDNYEMTKKLKKICKHVAIIAAEPIREPEQNRNPVTRREPNREPEQNRSRVTRREPSREPEPNRAPLARRESRPRTHSRPSIPHARPSRVRGENSDGCIIM</sequence>
<reference key="1">
    <citation type="submission" date="1999-04" db="EMBL/GenBank/DDBJ databases">
        <title>Structural analysis of Arabidopsis thaliana chromosome 5. XI.</title>
        <authorList>
            <person name="Kaneko T."/>
            <person name="Katoh T."/>
            <person name="Asamizu E."/>
            <person name="Sato S."/>
            <person name="Nakamura Y."/>
            <person name="Kotani H."/>
            <person name="Tabata S."/>
        </authorList>
    </citation>
    <scope>NUCLEOTIDE SEQUENCE [LARGE SCALE GENOMIC DNA]</scope>
    <source>
        <strain>cv. Columbia</strain>
    </source>
</reference>
<reference key="2">
    <citation type="journal article" date="2017" name="Plant J.">
        <title>Araport11: a complete reannotation of the Arabidopsis thaliana reference genome.</title>
        <authorList>
            <person name="Cheng C.Y."/>
            <person name="Krishnakumar V."/>
            <person name="Chan A.P."/>
            <person name="Thibaud-Nissen F."/>
            <person name="Schobel S."/>
            <person name="Town C.D."/>
        </authorList>
    </citation>
    <scope>GENOME REANNOTATION</scope>
    <source>
        <strain>cv. Columbia</strain>
    </source>
</reference>
<reference key="3">
    <citation type="journal article" date="2010" name="Metallomics">
        <title>Metallochaperone-like genes in Arabidopsis thaliana.</title>
        <authorList>
            <person name="Tehseen M."/>
            <person name="Cairns N."/>
            <person name="Sherson S."/>
            <person name="Cobbett C.S."/>
        </authorList>
    </citation>
    <scope>GENE FAMILY</scope>
    <scope>NOMENCLATURE</scope>
</reference>
<reference key="4">
    <citation type="journal article" date="2013" name="FEBS J.">
        <title>Heavy metal-associated isoprenylated plant protein (HIPP): characterization of a family of proteins exclusive to plants.</title>
        <authorList>
            <person name="de Abreu-Neto J.B."/>
            <person name="Turchetto-Zolet A.C."/>
            <person name="de Oliveira L.F."/>
            <person name="Zanettini M.H."/>
            <person name="Margis-Pinheiro M."/>
        </authorList>
    </citation>
    <scope>GENE FAMILY</scope>
    <scope>NOMENCLATURE</scope>
</reference>
<evidence type="ECO:0000250" key="1">
    <source>
        <dbReference type="UniProtKB" id="Q9LZF1"/>
    </source>
</evidence>
<evidence type="ECO:0000250" key="2">
    <source>
        <dbReference type="UniProtKB" id="Q9SZN7"/>
    </source>
</evidence>
<evidence type="ECO:0000255" key="3">
    <source>
        <dbReference type="PROSITE-ProRule" id="PRU00280"/>
    </source>
</evidence>
<evidence type="ECO:0000256" key="4">
    <source>
        <dbReference type="SAM" id="MobiDB-lite"/>
    </source>
</evidence>
<evidence type="ECO:0000303" key="5">
    <source>
    </source>
</evidence>
<evidence type="ECO:0000303" key="6">
    <source>
    </source>
</evidence>
<evidence type="ECO:0000305" key="7"/>
<evidence type="ECO:0000305" key="8">
    <source>
    </source>
</evidence>
<evidence type="ECO:0000312" key="9">
    <source>
        <dbReference type="Araport" id="AT5G52730"/>
    </source>
</evidence>
<evidence type="ECO:0000312" key="10">
    <source>
        <dbReference type="EMBL" id="BAA98091.1"/>
    </source>
</evidence>
<comment type="function">
    <text evidence="1">Probable heavy-metal-binding protein.</text>
</comment>
<comment type="similarity">
    <text evidence="7">Belongs to the HIPP family.</text>
</comment>
<comment type="caution">
    <text evidence="8">Contains an apparent HMA-like domain but lacks the core conserved Cys-X-X-Cys motif.</text>
</comment>
<organism evidence="10">
    <name type="scientific">Arabidopsis thaliana</name>
    <name type="common">Mouse-ear cress</name>
    <dbReference type="NCBI Taxonomy" id="3702"/>
    <lineage>
        <taxon>Eukaryota</taxon>
        <taxon>Viridiplantae</taxon>
        <taxon>Streptophyta</taxon>
        <taxon>Embryophyta</taxon>
        <taxon>Tracheophyta</taxon>
        <taxon>Spermatophyta</taxon>
        <taxon>Magnoliopsida</taxon>
        <taxon>eudicotyledons</taxon>
        <taxon>Gunneridae</taxon>
        <taxon>Pentapetalae</taxon>
        <taxon>rosids</taxon>
        <taxon>malvids</taxon>
        <taxon>Brassicales</taxon>
        <taxon>Brassicaceae</taxon>
        <taxon>Camelineae</taxon>
        <taxon>Arabidopsis</taxon>
    </lineage>
</organism>
<gene>
    <name evidence="5 6" type="primary">HIPP11</name>
    <name evidence="9" type="ordered locus">At5g52730</name>
    <name evidence="10" type="ORF">F6N7.22</name>
</gene>
<accession>Q9LTE4</accession>
<keyword id="KW-0449">Lipoprotein</keyword>
<keyword id="KW-0479">Metal-binding</keyword>
<keyword id="KW-0488">Methylation</keyword>
<keyword id="KW-0636">Prenylation</keyword>
<keyword id="KW-1185">Reference proteome</keyword>
<proteinExistence type="inferred from homology"/>
<name>HIP11_ARATH</name>
<protein>
    <recommendedName>
        <fullName evidence="5 6">Heavy metal-associated isoprenylated plant protein 11</fullName>
        <shortName evidence="5 6">AtHIP11</shortName>
    </recommendedName>
</protein>